<keyword id="KW-0010">Activator</keyword>
<keyword id="KW-0103">Bromodomain</keyword>
<keyword id="KW-0156">Chromatin regulator</keyword>
<keyword id="KW-0175">Coiled coil</keyword>
<keyword id="KW-0221">Differentiation</keyword>
<keyword id="KW-0469">Meiosis</keyword>
<keyword id="KW-0507">mRNA processing</keyword>
<keyword id="KW-0508">mRNA splicing</keyword>
<keyword id="KW-0539">Nucleus</keyword>
<keyword id="KW-0597">Phosphoprotein</keyword>
<keyword id="KW-1185">Reference proteome</keyword>
<keyword id="KW-0677">Repeat</keyword>
<keyword id="KW-0744">Spermatogenesis</keyword>
<keyword id="KW-0804">Transcription</keyword>
<keyword id="KW-0805">Transcription regulation</keyword>
<keyword id="KW-0832">Ubl conjugation</keyword>
<organism>
    <name type="scientific">Macaca fascicularis</name>
    <name type="common">Crab-eating macaque</name>
    <name type="synonym">Cynomolgus monkey</name>
    <dbReference type="NCBI Taxonomy" id="9541"/>
    <lineage>
        <taxon>Eukaryota</taxon>
        <taxon>Metazoa</taxon>
        <taxon>Chordata</taxon>
        <taxon>Craniata</taxon>
        <taxon>Vertebrata</taxon>
        <taxon>Euteleostomi</taxon>
        <taxon>Mammalia</taxon>
        <taxon>Eutheria</taxon>
        <taxon>Euarchontoglires</taxon>
        <taxon>Primates</taxon>
        <taxon>Haplorrhini</taxon>
        <taxon>Catarrhini</taxon>
        <taxon>Cercopithecidae</taxon>
        <taxon>Cercopithecinae</taxon>
        <taxon>Macaca</taxon>
    </lineage>
</organism>
<evidence type="ECO:0000250" key="1">
    <source>
        <dbReference type="UniProtKB" id="Q58F21"/>
    </source>
</evidence>
<evidence type="ECO:0000250" key="2">
    <source>
        <dbReference type="UniProtKB" id="Q91Y44"/>
    </source>
</evidence>
<evidence type="ECO:0000255" key="3"/>
<evidence type="ECO:0000255" key="4">
    <source>
        <dbReference type="PROSITE-ProRule" id="PRU00035"/>
    </source>
</evidence>
<evidence type="ECO:0000255" key="5">
    <source>
        <dbReference type="PROSITE-ProRule" id="PRU00857"/>
    </source>
</evidence>
<evidence type="ECO:0000256" key="6">
    <source>
        <dbReference type="SAM" id="MobiDB-lite"/>
    </source>
</evidence>
<evidence type="ECO:0000305" key="7"/>
<name>BRDT_MACFA</name>
<sequence length="947" mass="107832">MSLPSRQTAIIVNPPPPEYINTKKNGRLTNQLQYLQKVVLKDLWKHSFSWPFQRPVDAVKLKLPDYYTIIKNPMDLNTIKKRLENKYYVKASECIEDFNTMFSNCYLYNKPGDDIVLMAQALEKLFVQKLSQMPQEEQVVGGKERIKKGTQQNIAVFSAKEKSSPNATEKVFKQQAIPSVFPKTSVSPLNVAQGASVNSSSQSVAQVTKGVKRKADTTTPATSVVKASSEFSPTFTEKSVTLPPIKENMPKNVLPDSQQQYNVVKSVKVTEQLRHCSEILKEMLAKKHFSYAWPFYNPVDVNALGLHNYYDIVKNPMDLGTIKEKMDNQEYKDAYKFAADVRLMFMNCYKYNPPDHEVVTMARMLQDVFETHFSKIPVEPVESMPLCYIKTDITETTGRENTNEASSEGNSSGDSEDERVQRLAKLQEQLKAVHQQLQVLSQVPFRKLNKKKEKSKKEKKKEKVNNSNENPRKMCEQMRLKEKSKRNQPKKRKQQYIGQKSEDEDNAKPMNYDEKRQLSLNINKLPGDKLGRVVHIIQSREPSLSNSNPDEIEIDFETLKASTLRELEKYVSACLRKRPLKPPAKKIMMSKEELHSQKKQELEKRLLDVNNQLNSRKRQTKSEKTQPSKAVGSVSRLSESSSSSSSSSESESSSSDLSSSDSSGSESEMFPKFTEVKPNDSPSKENVKKMKNECILPEGRIGITQIECSVQDKTSANTTLVHQTTPSHVMPPNHHQLAFNYQELEHLQTVKNISPLQILPPSGDSEQLSNGITVMHPSGDNATTMLESECQAPVQKDIKIKNADSWKSLGKSVKPSGVMKSSDELFNQFRKAAIEKEVKARTQELIRKHLEQNTKEPKVSQENQRDLGNGLTVESFSNKIQNKCSGEEQKEHQQSLEAQDKSKLWLLKDRNLAREKEQERRRREAMAGTIDMTLQSDIMTMFENNFD</sequence>
<comment type="function">
    <text evidence="2">Testis-specific chromatin protein that specifically binds histone H4 acetylated at 'Lys-5' and 'Lys-8' (H4K5ac and H4K8ac, respectively) and plays a key role in spermatogenesis. Required in late pachytene spermatocytes: plays a role in meiotic and post-meiotic cells by binding to acetylated histones at the promoter of specific meiotic and post-meiotic genes, facilitating their activation at the appropriate time. In the post-meiotic phase of spermatogenesis, binds to hyperacetylated histones and participates in their general removal from DNA. Also recognizes and binds a subset of butyrylated histones: able to bind histone H4 butyrylated at 'Lys-8' (H4K8ac), while it is not able to bind H4 butyrylated at 'Lys-5' (H4K5ac). Also acts as a component of the splicing machinery in pachytene spermatocytes and round spermatids and participates in 3'-UTR truncation of specific mRNAs in post-meiotic spermatids. Required for chromocenter organization, a structure comprised of peri-centromeric heterochromatin.</text>
</comment>
<comment type="subunit">
    <text evidence="1 2">Interacts with SMARCE1 (By similarity). Interacts with mRNA splicing machinery proteins SRSF2, DDX5, HNRNPK and TARDBP. Interacts with the acetylated N-terminus of histone H1, H2, H3 and H4. Interacts with P-TEFb components CDK9 and CCNT1/cyclin-T1 (By similarity).</text>
</comment>
<comment type="subcellular location">
    <subcellularLocation>
        <location evidence="2">Nucleus</location>
    </subcellularLocation>
    <text evidence="2">Detected on chromatin. Excluded from the chromocenter.</text>
</comment>
<comment type="domain">
    <text evidence="2">Bromo domains mediate interaction with histones that have acetylated lysine residues at specific positions. Bromo domain 1 mediates binding with histone H4 acetylated at 'Lys-5' and 'Lys-8' (H4K5ac and H4K8ac, respectively). The bromo domains also recognize and bind a subset of butyrylated histones: able to bind histone H4 butyrylated at 'Lys-8' (H4K8ac), while it is not able to bind H4 butyrylated at 'Lys-5' (H4K5ac).</text>
</comment>
<comment type="PTM">
    <text evidence="2">Ubiquitinated in a SPOP-dependent manner, leading to proteasomal degradation.</text>
</comment>
<comment type="similarity">
    <text evidence="7">Belongs to the BET family.</text>
</comment>
<comment type="sequence caution" evidence="7">
    <conflict type="frameshift">
        <sequence resource="EMBL-CDS" id="BAE00440"/>
    </conflict>
</comment>
<comment type="sequence caution" evidence="7">
    <conflict type="erroneous gene model prediction">
        <sequence resource="EMBL-CDS" id="EHH50073"/>
    </conflict>
</comment>
<feature type="chain" id="PRO_0000239226" description="Bromodomain testis-specific protein">
    <location>
        <begin position="1"/>
        <end position="947"/>
    </location>
</feature>
<feature type="domain" description="Bromo 1" evidence="4">
    <location>
        <begin position="27"/>
        <end position="133"/>
    </location>
</feature>
<feature type="domain" description="Bromo 2" evidence="4">
    <location>
        <begin position="267"/>
        <end position="376"/>
    </location>
</feature>
<feature type="domain" description="NET" evidence="5">
    <location>
        <begin position="500"/>
        <end position="582"/>
    </location>
</feature>
<feature type="region of interest" description="Disordered" evidence="6">
    <location>
        <begin position="395"/>
        <end position="421"/>
    </location>
</feature>
<feature type="region of interest" description="Disordered" evidence="6">
    <location>
        <begin position="444"/>
        <end position="512"/>
    </location>
</feature>
<feature type="region of interest" description="Disordered" evidence="6">
    <location>
        <begin position="610"/>
        <end position="690"/>
    </location>
</feature>
<feature type="region of interest" description="Disordered" evidence="6">
    <location>
        <begin position="849"/>
        <end position="873"/>
    </location>
</feature>
<feature type="coiled-coil region" evidence="3">
    <location>
        <begin position="417"/>
        <end position="470"/>
    </location>
</feature>
<feature type="short sequence motif" description="Nuclear localization signal" evidence="1">
    <location>
        <begin position="209"/>
        <end position="220"/>
    </location>
</feature>
<feature type="compositionally biased region" description="Low complexity" evidence="6">
    <location>
        <begin position="403"/>
        <end position="413"/>
    </location>
</feature>
<feature type="compositionally biased region" description="Basic residues" evidence="6">
    <location>
        <begin position="447"/>
        <end position="462"/>
    </location>
</feature>
<feature type="compositionally biased region" description="Basic and acidic residues" evidence="6">
    <location>
        <begin position="470"/>
        <end position="481"/>
    </location>
</feature>
<feature type="compositionally biased region" description="Basic residues" evidence="6">
    <location>
        <begin position="482"/>
        <end position="494"/>
    </location>
</feature>
<feature type="compositionally biased region" description="Low complexity" evidence="6">
    <location>
        <begin position="631"/>
        <end position="668"/>
    </location>
</feature>
<feature type="compositionally biased region" description="Basic and acidic residues" evidence="6">
    <location>
        <begin position="674"/>
        <end position="690"/>
    </location>
</feature>
<feature type="compositionally biased region" description="Basic and acidic residues" evidence="6">
    <location>
        <begin position="849"/>
        <end position="865"/>
    </location>
</feature>
<feature type="site" description="Histone H4K5ac binding" evidence="2">
    <location>
        <position position="109"/>
    </location>
</feature>
<feature type="site" description="Histone H4K5ac binding" evidence="2">
    <location>
        <position position="114"/>
    </location>
</feature>
<feature type="modified residue" description="Phosphoserine" evidence="2">
    <location>
        <position position="187"/>
    </location>
</feature>
<feature type="sequence conflict" description="In Ref. 1; BAE00440." evidence="7" ref="1">
    <original>V</original>
    <variation>M</variation>
    <location>
        <position position="127"/>
    </location>
</feature>
<feature type="sequence conflict" description="In Ref. 1; BAE00440." evidence="7" ref="1">
    <original>M</original>
    <variation>R</variation>
    <location>
        <position position="364"/>
    </location>
</feature>
<feature type="sequence conflict" description="In Ref. 1; BAE00440." evidence="7" ref="1">
    <original>D</original>
    <variation>A</variation>
    <location>
        <position position="414"/>
    </location>
</feature>
<reference key="1">
    <citation type="submission" date="2005-06" db="EMBL/GenBank/DDBJ databases">
        <title>DNA sequences of macaque genes expressed in brain or testis and its evolutionary implications.</title>
        <authorList>
            <consortium name="International consortium for macaque cDNA sequencing and analysis"/>
        </authorList>
    </citation>
    <scope>NUCLEOTIDE SEQUENCE [LARGE SCALE MRNA]</scope>
    <source>
        <tissue>Testis</tissue>
    </source>
</reference>
<reference key="2">
    <citation type="journal article" date="2011" name="Nat. Biotechnol.">
        <title>Genome sequencing and comparison of two nonhuman primate animal models, the cynomolgus and Chinese rhesus macaques.</title>
        <authorList>
            <person name="Yan G."/>
            <person name="Zhang G."/>
            <person name="Fang X."/>
            <person name="Zhang Y."/>
            <person name="Li C."/>
            <person name="Ling F."/>
            <person name="Cooper D.N."/>
            <person name="Li Q."/>
            <person name="Li Y."/>
            <person name="van Gool A.J."/>
            <person name="Du H."/>
            <person name="Chen J."/>
            <person name="Chen R."/>
            <person name="Zhang P."/>
            <person name="Huang Z."/>
            <person name="Thompson J.R."/>
            <person name="Meng Y."/>
            <person name="Bai Y."/>
            <person name="Wang J."/>
            <person name="Zhuo M."/>
            <person name="Wang T."/>
            <person name="Huang Y."/>
            <person name="Wei L."/>
            <person name="Li J."/>
            <person name="Wang Z."/>
            <person name="Hu H."/>
            <person name="Yang P."/>
            <person name="Le L."/>
            <person name="Stenson P.D."/>
            <person name="Li B."/>
            <person name="Liu X."/>
            <person name="Ball E.V."/>
            <person name="An N."/>
            <person name="Huang Q."/>
            <person name="Zhang Y."/>
            <person name="Fan W."/>
            <person name="Zhang X."/>
            <person name="Li Y."/>
            <person name="Wang W."/>
            <person name="Katze M.G."/>
            <person name="Su B."/>
            <person name="Nielsen R."/>
            <person name="Yang H."/>
            <person name="Wang J."/>
            <person name="Wang X."/>
            <person name="Wang J."/>
        </authorList>
    </citation>
    <scope>NUCLEOTIDE SEQUENCE [LARGE SCALE GENOMIC DNA]</scope>
</reference>
<dbReference type="EMBL" id="AB168316">
    <property type="protein sequence ID" value="BAE00440.1"/>
    <property type="status" value="ALT_FRAME"/>
    <property type="molecule type" value="mRNA"/>
</dbReference>
<dbReference type="EMBL" id="CM001276">
    <property type="protein sequence ID" value="EHH50073.1"/>
    <property type="status" value="ALT_SEQ"/>
    <property type="molecule type" value="Genomic_DNA"/>
</dbReference>
<dbReference type="SMR" id="Q4R8Y1"/>
<dbReference type="STRING" id="9541.ENSMFAP00000027075"/>
<dbReference type="eggNOG" id="KOG1474">
    <property type="taxonomic scope" value="Eukaryota"/>
</dbReference>
<dbReference type="OrthoDB" id="21449at2759"/>
<dbReference type="Proteomes" id="UP000009130">
    <property type="component" value="Chromosome 1"/>
</dbReference>
<dbReference type="Proteomes" id="UP000233100">
    <property type="component" value="Unplaced"/>
</dbReference>
<dbReference type="GO" id="GO:0000785">
    <property type="term" value="C:chromatin"/>
    <property type="evidence" value="ECO:0007669"/>
    <property type="project" value="TreeGrafter"/>
</dbReference>
<dbReference type="GO" id="GO:0005634">
    <property type="term" value="C:nucleus"/>
    <property type="evidence" value="ECO:0000250"/>
    <property type="project" value="UniProtKB"/>
</dbReference>
<dbReference type="GO" id="GO:0140008">
    <property type="term" value="F:histone H4 reader activity"/>
    <property type="evidence" value="ECO:0000250"/>
    <property type="project" value="UniProtKB"/>
</dbReference>
<dbReference type="GO" id="GO:0070577">
    <property type="term" value="F:lysine-acetylated histone binding"/>
    <property type="evidence" value="ECO:0007669"/>
    <property type="project" value="TreeGrafter"/>
</dbReference>
<dbReference type="GO" id="GO:0006338">
    <property type="term" value="P:chromatin remodeling"/>
    <property type="evidence" value="ECO:0000250"/>
    <property type="project" value="UniProtKB"/>
</dbReference>
<dbReference type="GO" id="GO:0007141">
    <property type="term" value="P:male meiosis I"/>
    <property type="evidence" value="ECO:0000250"/>
    <property type="project" value="UniProtKB"/>
</dbReference>
<dbReference type="GO" id="GO:0007140">
    <property type="term" value="P:male meiotic nuclear division"/>
    <property type="evidence" value="ECO:0000250"/>
    <property type="project" value="UniProtKB"/>
</dbReference>
<dbReference type="GO" id="GO:0006397">
    <property type="term" value="P:mRNA processing"/>
    <property type="evidence" value="ECO:0007669"/>
    <property type="project" value="UniProtKB-KW"/>
</dbReference>
<dbReference type="GO" id="GO:0010628">
    <property type="term" value="P:positive regulation of gene expression"/>
    <property type="evidence" value="ECO:0000250"/>
    <property type="project" value="UniProtKB"/>
</dbReference>
<dbReference type="GO" id="GO:0006355">
    <property type="term" value="P:regulation of DNA-templated transcription"/>
    <property type="evidence" value="ECO:0007669"/>
    <property type="project" value="TreeGrafter"/>
</dbReference>
<dbReference type="GO" id="GO:0043484">
    <property type="term" value="P:regulation of RNA splicing"/>
    <property type="evidence" value="ECO:0000250"/>
    <property type="project" value="UniProtKB"/>
</dbReference>
<dbReference type="GO" id="GO:0008380">
    <property type="term" value="P:RNA splicing"/>
    <property type="evidence" value="ECO:0007669"/>
    <property type="project" value="UniProtKB-KW"/>
</dbReference>
<dbReference type="GO" id="GO:0035092">
    <property type="term" value="P:sperm DNA condensation"/>
    <property type="evidence" value="ECO:0000250"/>
    <property type="project" value="UniProtKB"/>
</dbReference>
<dbReference type="CDD" id="cd05497">
    <property type="entry name" value="Bromo_Brdt_I_like"/>
    <property type="match status" value="1"/>
</dbReference>
<dbReference type="CDD" id="cd05498">
    <property type="entry name" value="Bromo_Brdt_II_like"/>
    <property type="match status" value="1"/>
</dbReference>
<dbReference type="FunFam" id="1.20.920.10:FF:000003">
    <property type="entry name" value="Bromodomain-containing protein 2"/>
    <property type="match status" value="1"/>
</dbReference>
<dbReference type="FunFam" id="1.20.1270.220:FF:000001">
    <property type="entry name" value="bromodomain-containing protein 2 isoform X1"/>
    <property type="match status" value="1"/>
</dbReference>
<dbReference type="FunFam" id="1.20.920.10:FF:000002">
    <property type="entry name" value="Bromodomain-containing protein 4"/>
    <property type="match status" value="1"/>
</dbReference>
<dbReference type="Gene3D" id="1.20.1270.220">
    <property type="match status" value="1"/>
</dbReference>
<dbReference type="Gene3D" id="1.20.920.10">
    <property type="entry name" value="Bromodomain-like"/>
    <property type="match status" value="2"/>
</dbReference>
<dbReference type="InterPro" id="IPR031354">
    <property type="entry name" value="BRD4_CDT"/>
</dbReference>
<dbReference type="InterPro" id="IPR043508">
    <property type="entry name" value="Bromo_Brdt_I"/>
</dbReference>
<dbReference type="InterPro" id="IPR043509">
    <property type="entry name" value="Bromo_Brdt_II"/>
</dbReference>
<dbReference type="InterPro" id="IPR050935">
    <property type="entry name" value="Bromo_chromatin_reader"/>
</dbReference>
<dbReference type="InterPro" id="IPR001487">
    <property type="entry name" value="Bromodomain"/>
</dbReference>
<dbReference type="InterPro" id="IPR036427">
    <property type="entry name" value="Bromodomain-like_sf"/>
</dbReference>
<dbReference type="InterPro" id="IPR018359">
    <property type="entry name" value="Bromodomain_CS"/>
</dbReference>
<dbReference type="InterPro" id="IPR027353">
    <property type="entry name" value="NET_dom"/>
</dbReference>
<dbReference type="InterPro" id="IPR038336">
    <property type="entry name" value="NET_sf"/>
</dbReference>
<dbReference type="PANTHER" id="PTHR22880:SF175">
    <property type="entry name" value="BROMODOMAIN TESTIS-SPECIFIC PROTEIN"/>
    <property type="match status" value="1"/>
</dbReference>
<dbReference type="PANTHER" id="PTHR22880">
    <property type="entry name" value="FALZ-RELATED BROMODOMAIN-CONTAINING PROTEINS"/>
    <property type="match status" value="1"/>
</dbReference>
<dbReference type="Pfam" id="PF17035">
    <property type="entry name" value="BET"/>
    <property type="match status" value="1"/>
</dbReference>
<dbReference type="Pfam" id="PF17105">
    <property type="entry name" value="BRD4_CDT"/>
    <property type="match status" value="1"/>
</dbReference>
<dbReference type="Pfam" id="PF00439">
    <property type="entry name" value="Bromodomain"/>
    <property type="match status" value="2"/>
</dbReference>
<dbReference type="PRINTS" id="PR00503">
    <property type="entry name" value="BROMODOMAIN"/>
</dbReference>
<dbReference type="SMART" id="SM00297">
    <property type="entry name" value="BROMO"/>
    <property type="match status" value="2"/>
</dbReference>
<dbReference type="SUPFAM" id="SSF47370">
    <property type="entry name" value="Bromodomain"/>
    <property type="match status" value="2"/>
</dbReference>
<dbReference type="PROSITE" id="PS00633">
    <property type="entry name" value="BROMODOMAIN_1"/>
    <property type="match status" value="2"/>
</dbReference>
<dbReference type="PROSITE" id="PS50014">
    <property type="entry name" value="BROMODOMAIN_2"/>
    <property type="match status" value="2"/>
</dbReference>
<dbReference type="PROSITE" id="PS51525">
    <property type="entry name" value="NET"/>
    <property type="match status" value="1"/>
</dbReference>
<gene>
    <name type="primary">BRDT</name>
    <name type="ORF">QtsA-11165</name>
</gene>
<protein>
    <recommendedName>
        <fullName>Bromodomain testis-specific protein</fullName>
    </recommendedName>
</protein>
<accession>Q4R8Y1</accession>
<accession>G7NTN6</accession>
<proteinExistence type="evidence at transcript level"/>